<proteinExistence type="inferred from homology"/>
<sequence>MADMKRLKHLMFSPFIDNNPIALQVLGICSALAVTTKLQTAIVMGISVALVTGFSSFFISLVRNYIPNSIRIIVQMAIIASLVTLVDQLLQAFAYELSKQLSVFVGLIITNCIVMGRAEAFAMKEPPLESLIDGIGNGAGYGMMLLVVATVRELIGSGKLLGYTVFQTVQDGGWYQTNGLFLLAPSAFFIIGFLIWGLRTWKPEQAEE</sequence>
<dbReference type="EC" id="7.2.1.1" evidence="1"/>
<dbReference type="EMBL" id="AL157959">
    <property type="protein sequence ID" value="CAM08000.1"/>
    <property type="molecule type" value="Genomic_DNA"/>
</dbReference>
<dbReference type="PIR" id="F81918">
    <property type="entry name" value="F81918"/>
</dbReference>
<dbReference type="RefSeq" id="WP_002214361.1">
    <property type="nucleotide sequence ID" value="NC_003116.1"/>
</dbReference>
<dbReference type="SMR" id="Q9JVQ1"/>
<dbReference type="EnsemblBacteria" id="CAM08000">
    <property type="protein sequence ID" value="CAM08000"/>
    <property type="gene ID" value="NMA0749"/>
</dbReference>
<dbReference type="KEGG" id="nma:NMA0749"/>
<dbReference type="HOGENOM" id="CLU_046659_1_1_4"/>
<dbReference type="Proteomes" id="UP000000626">
    <property type="component" value="Chromosome"/>
</dbReference>
<dbReference type="GO" id="GO:0005886">
    <property type="term" value="C:plasma membrane"/>
    <property type="evidence" value="ECO:0007669"/>
    <property type="project" value="UniProtKB-SubCell"/>
</dbReference>
<dbReference type="GO" id="GO:0016655">
    <property type="term" value="F:oxidoreductase activity, acting on NAD(P)H, quinone or similar compound as acceptor"/>
    <property type="evidence" value="ECO:0007669"/>
    <property type="project" value="UniProtKB-UniRule"/>
</dbReference>
<dbReference type="GO" id="GO:0006814">
    <property type="term" value="P:sodium ion transport"/>
    <property type="evidence" value="ECO:0007669"/>
    <property type="project" value="UniProtKB-UniRule"/>
</dbReference>
<dbReference type="HAMAP" id="MF_00428">
    <property type="entry name" value="NqrD"/>
    <property type="match status" value="1"/>
</dbReference>
<dbReference type="InterPro" id="IPR011292">
    <property type="entry name" value="NqrD"/>
</dbReference>
<dbReference type="InterPro" id="IPR003667">
    <property type="entry name" value="NqrDE/RnfAE"/>
</dbReference>
<dbReference type="NCBIfam" id="TIGR01939">
    <property type="entry name" value="nqrD"/>
    <property type="match status" value="1"/>
</dbReference>
<dbReference type="NCBIfam" id="NF006777">
    <property type="entry name" value="PRK09292.1"/>
    <property type="match status" value="1"/>
</dbReference>
<dbReference type="NCBIfam" id="NF009070">
    <property type="entry name" value="PRK12405.1"/>
    <property type="match status" value="1"/>
</dbReference>
<dbReference type="PANTHER" id="PTHR30586">
    <property type="entry name" value="ELECTRON TRANSPORT COMPLEX PROTEIN RNFE"/>
    <property type="match status" value="1"/>
</dbReference>
<dbReference type="PANTHER" id="PTHR30586:SF1">
    <property type="entry name" value="NA(+)-TRANSLOCATING NADH-QUINONE REDUCTASE SUBUNIT D"/>
    <property type="match status" value="1"/>
</dbReference>
<dbReference type="Pfam" id="PF02508">
    <property type="entry name" value="Rnf-Nqr"/>
    <property type="match status" value="1"/>
</dbReference>
<dbReference type="PIRSF" id="PIRSF006102">
    <property type="entry name" value="NQR_DE"/>
    <property type="match status" value="1"/>
</dbReference>
<evidence type="ECO:0000255" key="1">
    <source>
        <dbReference type="HAMAP-Rule" id="MF_00428"/>
    </source>
</evidence>
<keyword id="KW-0997">Cell inner membrane</keyword>
<keyword id="KW-1003">Cell membrane</keyword>
<keyword id="KW-0406">Ion transport</keyword>
<keyword id="KW-0472">Membrane</keyword>
<keyword id="KW-0520">NAD</keyword>
<keyword id="KW-0915">Sodium</keyword>
<keyword id="KW-0739">Sodium transport</keyword>
<keyword id="KW-1278">Translocase</keyword>
<keyword id="KW-0812">Transmembrane</keyword>
<keyword id="KW-1133">Transmembrane helix</keyword>
<keyword id="KW-0813">Transport</keyword>
<keyword id="KW-0830">Ubiquinone</keyword>
<organism>
    <name type="scientific">Neisseria meningitidis serogroup A / serotype 4A (strain DSM 15465 / Z2491)</name>
    <dbReference type="NCBI Taxonomy" id="122587"/>
    <lineage>
        <taxon>Bacteria</taxon>
        <taxon>Pseudomonadati</taxon>
        <taxon>Pseudomonadota</taxon>
        <taxon>Betaproteobacteria</taxon>
        <taxon>Neisseriales</taxon>
        <taxon>Neisseriaceae</taxon>
        <taxon>Neisseria</taxon>
    </lineage>
</organism>
<name>NQRD_NEIMA</name>
<accession>Q9JVQ1</accession>
<accession>A1IQG9</accession>
<comment type="function">
    <text evidence="1">NQR complex catalyzes the reduction of ubiquinone-1 to ubiquinol by two successive reactions, coupled with the transport of Na(+) ions from the cytoplasm to the periplasm. NqrA to NqrE are probably involved in the second step, the conversion of ubisemiquinone to ubiquinol.</text>
</comment>
<comment type="catalytic activity">
    <reaction evidence="1">
        <text>a ubiquinone + n Na(+)(in) + NADH + H(+) = a ubiquinol + n Na(+)(out) + NAD(+)</text>
        <dbReference type="Rhea" id="RHEA:47748"/>
        <dbReference type="Rhea" id="RHEA-COMP:9565"/>
        <dbReference type="Rhea" id="RHEA-COMP:9566"/>
        <dbReference type="ChEBI" id="CHEBI:15378"/>
        <dbReference type="ChEBI" id="CHEBI:16389"/>
        <dbReference type="ChEBI" id="CHEBI:17976"/>
        <dbReference type="ChEBI" id="CHEBI:29101"/>
        <dbReference type="ChEBI" id="CHEBI:57540"/>
        <dbReference type="ChEBI" id="CHEBI:57945"/>
        <dbReference type="EC" id="7.2.1.1"/>
    </reaction>
</comment>
<comment type="subunit">
    <text evidence="1">Composed of six subunits; NqrA, NqrB, NqrC, NqrD, NqrE and NqrF.</text>
</comment>
<comment type="subcellular location">
    <subcellularLocation>
        <location evidence="1">Cell inner membrane</location>
        <topology evidence="1">Multi-pass membrane protein</topology>
    </subcellularLocation>
</comment>
<comment type="similarity">
    <text evidence="1">Belongs to the NqrDE/RnfAE family.</text>
</comment>
<gene>
    <name evidence="1" type="primary">nqrD</name>
    <name type="ordered locus">NMA0749</name>
</gene>
<protein>
    <recommendedName>
        <fullName evidence="1">Na(+)-translocating NADH-quinone reductase subunit D</fullName>
        <shortName evidence="1">Na(+)-NQR subunit D</shortName>
        <shortName evidence="1">Na(+)-translocating NQR subunit D</shortName>
        <ecNumber evidence="1">7.2.1.1</ecNumber>
    </recommendedName>
    <alternativeName>
        <fullName evidence="1">NQR complex subunit D</fullName>
    </alternativeName>
    <alternativeName>
        <fullName evidence="1">NQR-1 subunit D</fullName>
    </alternativeName>
</protein>
<feature type="chain" id="PRO_0000214235" description="Na(+)-translocating NADH-quinone reductase subunit D">
    <location>
        <begin position="1"/>
        <end position="208"/>
    </location>
</feature>
<feature type="transmembrane region" description="Helical" evidence="1">
    <location>
        <begin position="42"/>
        <end position="62"/>
    </location>
</feature>
<feature type="transmembrane region" description="Helical" evidence="1">
    <location>
        <begin position="72"/>
        <end position="92"/>
    </location>
</feature>
<feature type="transmembrane region" description="Helical" evidence="1">
    <location>
        <begin position="103"/>
        <end position="123"/>
    </location>
</feature>
<feature type="transmembrane region" description="Helical" evidence="1">
    <location>
        <begin position="131"/>
        <end position="151"/>
    </location>
</feature>
<feature type="transmembrane region" description="Helical" evidence="1">
    <location>
        <begin position="178"/>
        <end position="198"/>
    </location>
</feature>
<reference key="1">
    <citation type="journal article" date="2000" name="Nature">
        <title>Complete DNA sequence of a serogroup A strain of Neisseria meningitidis Z2491.</title>
        <authorList>
            <person name="Parkhill J."/>
            <person name="Achtman M."/>
            <person name="James K.D."/>
            <person name="Bentley S.D."/>
            <person name="Churcher C.M."/>
            <person name="Klee S.R."/>
            <person name="Morelli G."/>
            <person name="Basham D."/>
            <person name="Brown D."/>
            <person name="Chillingworth T."/>
            <person name="Davies R.M."/>
            <person name="Davis P."/>
            <person name="Devlin K."/>
            <person name="Feltwell T."/>
            <person name="Hamlin N."/>
            <person name="Holroyd S."/>
            <person name="Jagels K."/>
            <person name="Leather S."/>
            <person name="Moule S."/>
            <person name="Mungall K.L."/>
            <person name="Quail M.A."/>
            <person name="Rajandream M.A."/>
            <person name="Rutherford K.M."/>
            <person name="Simmonds M."/>
            <person name="Skelton J."/>
            <person name="Whitehead S."/>
            <person name="Spratt B.G."/>
            <person name="Barrell B.G."/>
        </authorList>
    </citation>
    <scope>NUCLEOTIDE SEQUENCE [LARGE SCALE GENOMIC DNA]</scope>
    <source>
        <strain>DSM 15465 / Z2491</strain>
    </source>
</reference>